<keyword id="KW-0256">Endoplasmic reticulum</keyword>
<keyword id="KW-0472">Membrane</keyword>
<keyword id="KW-0539">Nucleus</keyword>
<keyword id="KW-1185">Reference proteome</keyword>
<keyword id="KW-0812">Transmembrane</keyword>
<keyword id="KW-1133">Transmembrane helix</keyword>
<reference key="1">
    <citation type="submission" date="2006-06" db="EMBL/GenBank/DDBJ databases">
        <authorList>
            <consortium name="Sanger Xenopus tropicalis EST/cDNA project"/>
        </authorList>
    </citation>
    <scope>NUCLEOTIDE SEQUENCE [LARGE SCALE MRNA]</scope>
    <source>
        <tissue>Egg</tissue>
    </source>
</reference>
<reference key="2">
    <citation type="submission" date="2004-07" db="EMBL/GenBank/DDBJ databases">
        <authorList>
            <consortium name="NIH - Xenopus Gene Collection (XGC) project"/>
        </authorList>
    </citation>
    <scope>NUCLEOTIDE SEQUENCE [LARGE SCALE MRNA]</scope>
    <source>
        <tissue>Embryo</tissue>
    </source>
</reference>
<sequence>MAVCARLLEWIFFFYFFSHIPITLLVDLQAVLPPSLYPQELLDLMKWYTVAFKDHLMANPPPWFKSFVYCEAILQLPFFPVAAYAFFKGGCKWIRIPAIVYSAHVATTVIAIIGHILFGEFPKSDVIAPLTQKDRLTLVSIYAPYLLVPVLLLLTMLFSPRYRQEEKRKRK</sequence>
<feature type="chain" id="PRO_0000254571" description="Sigma intracellular receptor 2">
    <location>
        <begin position="1"/>
        <end position="171"/>
    </location>
</feature>
<feature type="topological domain" description="Cytoplasmic" evidence="1">
    <location>
        <begin position="1"/>
        <end position="6"/>
    </location>
</feature>
<feature type="transmembrane region" description="Helical; Name=1" evidence="4">
    <location>
        <begin position="7"/>
        <end position="27"/>
    </location>
</feature>
<feature type="topological domain" description="Lumenal" evidence="1">
    <location>
        <begin position="28"/>
        <end position="66"/>
    </location>
</feature>
<feature type="transmembrane region" description="Helical; Name=2" evidence="4">
    <location>
        <begin position="67"/>
        <end position="87"/>
    </location>
</feature>
<feature type="topological domain" description="Cytoplasmic" evidence="1">
    <location>
        <begin position="88"/>
        <end position="97"/>
    </location>
</feature>
<feature type="transmembrane region" description="Helical; Name=3" evidence="4">
    <location>
        <begin position="98"/>
        <end position="118"/>
    </location>
</feature>
<feature type="topological domain" description="Lumenal" evidence="1">
    <location>
        <begin position="119"/>
        <end position="137"/>
    </location>
</feature>
<feature type="transmembrane region" description="Helical; Name=4" evidence="4">
    <location>
        <begin position="138"/>
        <end position="158"/>
    </location>
</feature>
<feature type="topological domain" description="Cytoplasmic" evidence="1">
    <location>
        <begin position="159"/>
        <end position="171"/>
    </location>
</feature>
<feature type="domain" description="EXPERA" evidence="5">
    <location>
        <begin position="8"/>
        <end position="153"/>
    </location>
</feature>
<feature type="short sequence motif" description="ER retention motif" evidence="3">
    <location>
        <begin position="167"/>
        <end position="171"/>
    </location>
</feature>
<feature type="binding site" evidence="2">
    <location>
        <position position="73"/>
    </location>
    <ligand>
        <name>cholesterol</name>
        <dbReference type="ChEBI" id="CHEBI:16113"/>
    </ligand>
</feature>
<feature type="binding site" evidence="2">
    <location>
        <position position="75"/>
    </location>
    <ligand>
        <name>cholesterol</name>
        <dbReference type="ChEBI" id="CHEBI:16113"/>
    </ligand>
</feature>
<feature type="site" description="Likely important for receptor folding" evidence="3">
    <location>
        <position position="54"/>
    </location>
</feature>
<feature type="site" description="Important for 20(S)-OHC binding and stereoselectivity" evidence="3">
    <location>
        <position position="145"/>
    </location>
</feature>
<proteinExistence type="evidence at transcript level"/>
<comment type="function">
    <text evidence="1 2 3">Sigma-2 receptor which contributes to ameliorate dysfunctional cellular processes and slow degenerative progression by regulating cell functions including cholesterol biosynthesis/trafficking, membrane trafficking, autophagy, lipid membrane-bound protein trafficking, and receptor stabilization at the cell surface. Forms a ternary complex with PGRMC1 receptor and low density lipoprotein receptor/LDLR at the plasma membrane, which increases LDLR-mediated LDL cholesterol internalization. Decreases lysosomal sterol transporter NPC1 availability to the cell, probably through NPC1-binding, hence controlling lipid transport, including cholesterol and LBPA, outside of late endosome/lysosome. Binds regio- and stereoselective ligand 20(S)-hydroxycholesterol (20(S)-OHC), thereby linking OHC binding to cholesterol homeostasis (By similarity). Also able to bind cholesterol (By similarity). Binds histatin 1 (Hst 1)/HN1 salivary peptide at the ER membrane, which is critical for increasing mitochondria-ER contacts and stimulating Hst1 wound healing properties. May alter the activity of some cytochrome P450 proteins. Although shows homologies with sterol isomerases (EXPERA domain), not able to catalyze sterol isomerization. However, may act as sensors of these molecules (By similarity). Acts as a quality control factor in the ER, promoting the proteolytic degradation of nonproductive and extramitochondrial precursor proteins in the ER membrane thus removing them from the ER surface (By similarity).</text>
</comment>
<comment type="subunit">
    <text evidence="2">Homodimer.</text>
</comment>
<comment type="subcellular location">
    <subcellularLocation>
        <location evidence="3">Rough endoplasmic reticulum membrane</location>
        <topology evidence="4">Multi-pass membrane protein</topology>
    </subcellularLocation>
    <subcellularLocation>
        <location evidence="3">Nucleus membrane</location>
        <topology evidence="4">Multi-pass membrane protein</topology>
    </subcellularLocation>
</comment>
<comment type="domain">
    <text evidence="3">The EXPERA domain doesn't possess any sterol isomerase catalytic activity.</text>
</comment>
<comment type="miscellaneous">
    <text evidence="3">Sigma receptors are classified into two subtypes (Sigma-1 and Sigma-2) based on their different pharmacological profile. Sigma-2 receptors are identified by radioligand-binding studies as a binding site with high affinity for di-o-tolylguanidine (DTG) and haloperidol.</text>
</comment>
<comment type="similarity">
    <text evidence="6">Belongs to the TMEM97/sigma-2 receptor family.</text>
</comment>
<dbReference type="EMBL" id="CR848476">
    <property type="protein sequence ID" value="CAJ81433.1"/>
    <property type="molecule type" value="mRNA"/>
</dbReference>
<dbReference type="EMBL" id="BC076679">
    <property type="protein sequence ID" value="AAH76679.1"/>
    <property type="molecule type" value="mRNA"/>
</dbReference>
<dbReference type="RefSeq" id="NP_001005014.1">
    <property type="nucleotide sequence ID" value="NM_001005014.2"/>
</dbReference>
<dbReference type="SMR" id="Q6DFQ5"/>
<dbReference type="FunCoup" id="Q6DFQ5">
    <property type="interactions" value="1125"/>
</dbReference>
<dbReference type="STRING" id="8364.ENSXETP00000034261"/>
<dbReference type="PaxDb" id="8364-ENSXETP00000011270"/>
<dbReference type="DNASU" id="448515"/>
<dbReference type="GeneID" id="448515"/>
<dbReference type="KEGG" id="xtr:448515"/>
<dbReference type="AGR" id="Xenbase:XB-GENE-5905052"/>
<dbReference type="CTD" id="27346"/>
<dbReference type="Xenbase" id="XB-GENE-5905052">
    <property type="gene designation" value="tmem97"/>
</dbReference>
<dbReference type="eggNOG" id="ENOG502RZRX">
    <property type="taxonomic scope" value="Eukaryota"/>
</dbReference>
<dbReference type="HOGENOM" id="CLU_086812_1_0_1"/>
<dbReference type="InParanoid" id="Q6DFQ5"/>
<dbReference type="OMA" id="EFKDPMV"/>
<dbReference type="OrthoDB" id="433124at2759"/>
<dbReference type="PhylomeDB" id="Q6DFQ5"/>
<dbReference type="Proteomes" id="UP000008143">
    <property type="component" value="Chromosome 2"/>
</dbReference>
<dbReference type="Bgee" id="ENSXETG00000002126">
    <property type="expression patterns" value="Expressed in liver and 22 other cell types or tissues"/>
</dbReference>
<dbReference type="GO" id="GO:0005764">
    <property type="term" value="C:lysosome"/>
    <property type="evidence" value="ECO:0000250"/>
    <property type="project" value="UniProtKB"/>
</dbReference>
<dbReference type="GO" id="GO:0031965">
    <property type="term" value="C:nuclear membrane"/>
    <property type="evidence" value="ECO:0000250"/>
    <property type="project" value="UniProtKB"/>
</dbReference>
<dbReference type="GO" id="GO:0005886">
    <property type="term" value="C:plasma membrane"/>
    <property type="evidence" value="ECO:0000250"/>
    <property type="project" value="UniProtKB"/>
</dbReference>
<dbReference type="GO" id="GO:0005791">
    <property type="term" value="C:rough endoplasmic reticulum"/>
    <property type="evidence" value="ECO:0000250"/>
    <property type="project" value="UniProtKB"/>
</dbReference>
<dbReference type="GO" id="GO:0030867">
    <property type="term" value="C:rough endoplasmic reticulum membrane"/>
    <property type="evidence" value="ECO:0007669"/>
    <property type="project" value="UniProtKB-SubCell"/>
</dbReference>
<dbReference type="GO" id="GO:0015485">
    <property type="term" value="F:cholesterol binding"/>
    <property type="evidence" value="ECO:0000250"/>
    <property type="project" value="UniProtKB"/>
</dbReference>
<dbReference type="GO" id="GO:0008142">
    <property type="term" value="F:oxysterol binding"/>
    <property type="evidence" value="ECO:0000250"/>
    <property type="project" value="UniProtKB"/>
</dbReference>
<dbReference type="GO" id="GO:0042632">
    <property type="term" value="P:cholesterol homeostasis"/>
    <property type="evidence" value="ECO:0000250"/>
    <property type="project" value="UniProtKB"/>
</dbReference>
<dbReference type="GO" id="GO:0140077">
    <property type="term" value="P:positive regulation of lipoprotein transport"/>
    <property type="evidence" value="ECO:0000250"/>
    <property type="project" value="UniProtKB"/>
</dbReference>
<dbReference type="GO" id="GO:0032383">
    <property type="term" value="P:regulation of intracellular cholesterol transport"/>
    <property type="evidence" value="ECO:0000250"/>
    <property type="project" value="UniProtKB"/>
</dbReference>
<dbReference type="GO" id="GO:0032377">
    <property type="term" value="P:regulation of intracellular lipid transport"/>
    <property type="evidence" value="ECO:0000250"/>
    <property type="project" value="UniProtKB"/>
</dbReference>
<dbReference type="InterPro" id="IPR033118">
    <property type="entry name" value="EXPERA"/>
</dbReference>
<dbReference type="InterPro" id="IPR051987">
    <property type="entry name" value="Sigma-2_receptor-like"/>
</dbReference>
<dbReference type="InterPro" id="IPR016964">
    <property type="entry name" value="Sigma2_recept"/>
</dbReference>
<dbReference type="PANTHER" id="PTHR31204">
    <property type="entry name" value="SIGMA INTRACELLULAR RECEPTOR 2"/>
    <property type="match status" value="1"/>
</dbReference>
<dbReference type="PANTHER" id="PTHR31204:SF1">
    <property type="entry name" value="SIGMA INTRACELLULAR RECEPTOR 2"/>
    <property type="match status" value="1"/>
</dbReference>
<dbReference type="Pfam" id="PF05241">
    <property type="entry name" value="EBP"/>
    <property type="match status" value="1"/>
</dbReference>
<dbReference type="PIRSF" id="PIRSF031032">
    <property type="entry name" value="TMP_97_prd"/>
    <property type="match status" value="1"/>
</dbReference>
<dbReference type="PROSITE" id="PS51751">
    <property type="entry name" value="EXPERA"/>
    <property type="match status" value="1"/>
</dbReference>
<name>SGMR2_XENTR</name>
<gene>
    <name type="primary">tmem97</name>
    <name evidence="3" type="synonym">s2r</name>
    <name type="ORF">TEgg113g04.1</name>
</gene>
<accession>Q6DFQ5</accession>
<evidence type="ECO:0000250" key="1">
    <source>
        <dbReference type="UniProtKB" id="Q12155"/>
    </source>
</evidence>
<evidence type="ECO:0000250" key="2">
    <source>
        <dbReference type="UniProtKB" id="Q3MHW7"/>
    </source>
</evidence>
<evidence type="ECO:0000250" key="3">
    <source>
        <dbReference type="UniProtKB" id="Q5BJF2"/>
    </source>
</evidence>
<evidence type="ECO:0000255" key="4"/>
<evidence type="ECO:0000255" key="5">
    <source>
        <dbReference type="PROSITE-ProRule" id="PRU01087"/>
    </source>
</evidence>
<evidence type="ECO:0000305" key="6"/>
<organism>
    <name type="scientific">Xenopus tropicalis</name>
    <name type="common">Western clawed frog</name>
    <name type="synonym">Silurana tropicalis</name>
    <dbReference type="NCBI Taxonomy" id="8364"/>
    <lineage>
        <taxon>Eukaryota</taxon>
        <taxon>Metazoa</taxon>
        <taxon>Chordata</taxon>
        <taxon>Craniata</taxon>
        <taxon>Vertebrata</taxon>
        <taxon>Euteleostomi</taxon>
        <taxon>Amphibia</taxon>
        <taxon>Batrachia</taxon>
        <taxon>Anura</taxon>
        <taxon>Pipoidea</taxon>
        <taxon>Pipidae</taxon>
        <taxon>Xenopodinae</taxon>
        <taxon>Xenopus</taxon>
        <taxon>Silurana</taxon>
    </lineage>
</organism>
<protein>
    <recommendedName>
        <fullName evidence="3">Sigma intracellular receptor 2</fullName>
        <shortName evidence="3">Sigma-2 receptor</shortName>
        <shortName evidence="3">Sigma2 receptor</shortName>
    </recommendedName>
    <alternativeName>
        <fullName evidence="3">Transmembrane protein 97</fullName>
    </alternativeName>
</protein>